<reference key="1">
    <citation type="journal article" date="2012" name="PLoS ONE">
        <title>Evolution of Burkholderia pseudomallei in recurrent melioidosis.</title>
        <authorList>
            <person name="Hayden H.S."/>
            <person name="Lim R."/>
            <person name="Brittnacher M.J."/>
            <person name="Sims E.H."/>
            <person name="Ramage E.R."/>
            <person name="Fong C."/>
            <person name="Wu Z."/>
            <person name="Crist E."/>
            <person name="Chang J."/>
            <person name="Zhou Y."/>
            <person name="Radey M."/>
            <person name="Rohmer L."/>
            <person name="Haugen E."/>
            <person name="Gillett W."/>
            <person name="Wuthiekanun V."/>
            <person name="Peacock S.J."/>
            <person name="Kaul R."/>
            <person name="Miller S.I."/>
            <person name="Manoil C."/>
            <person name="Jacobs M.A."/>
        </authorList>
    </citation>
    <scope>NUCLEOTIDE SEQUENCE [LARGE SCALE GENOMIC DNA]</scope>
    <source>
        <strain>1026b</strain>
    </source>
</reference>
<reference key="2">
    <citation type="journal article" date="2013" name="Infect. Immun.">
        <title>Functional characterization of Burkholderia pseudomallei trimeric autotransporters.</title>
        <authorList>
            <person name="Campos C.G."/>
            <person name="Byrd M.S."/>
            <person name="Cotter P.A."/>
        </authorList>
    </citation>
    <scope>FUNCTION IN VIRULENCE</scope>
    <scope>DOMAIN</scope>
    <scope>DISRUPTION PHENOTYPE</scope>
    <source>
        <strain>Bp340 / 1026b</strain>
    </source>
</reference>
<reference key="3">
    <citation type="journal article" date="2014" name="BMC Microbiol.">
        <title>Characterization of an autotransporter adhesin protein shared by Burkholderia mallei and Burkholderia pseudomallei.</title>
        <authorList>
            <person name="Lafontaine E.R."/>
            <person name="Balder R."/>
            <person name="Michel F."/>
            <person name="Hogan R.J."/>
        </authorList>
    </citation>
    <scope>FUNCTION</scope>
    <scope>SUBCELLULAR LOCATION</scope>
    <scope>INDUCTION</scope>
    <scope>DISRUPTION PHENOTYPE</scope>
    <source>
        <strain>DD503 / 1026b</strain>
    </source>
</reference>
<gene>
    <name evidence="5" type="primary">bpaC</name>
    <name evidence="8" type="ordered locus">BP1026B_I1575</name>
</gene>
<evidence type="ECO:0000250" key="1">
    <source>
        <dbReference type="UniProtKB" id="P0C2W0"/>
    </source>
</evidence>
<evidence type="ECO:0000256" key="2">
    <source>
        <dbReference type="SAM" id="MobiDB-lite"/>
    </source>
</evidence>
<evidence type="ECO:0000269" key="3">
    <source>
    </source>
</evidence>
<evidence type="ECO:0000269" key="4">
    <source>
    </source>
</evidence>
<evidence type="ECO:0000303" key="5">
    <source>
    </source>
</evidence>
<evidence type="ECO:0000305" key="6"/>
<evidence type="ECO:0000305" key="7">
    <source>
    </source>
</evidence>
<evidence type="ECO:0000312" key="8">
    <source>
        <dbReference type="EMBL" id="AFI66204.1"/>
    </source>
</evidence>
<evidence type="ECO:0007829" key="9">
    <source>
        <dbReference type="PDB" id="7O23"/>
    </source>
</evidence>
<accession>A0A0H3HIJ5</accession>
<protein>
    <recommendedName>
        <fullName evidence="6">Autotransporter adhesin BpaC</fullName>
    </recommendedName>
    <alternativeName>
        <fullName evidence="6">Type 5 secretion system autotransporter BpaC</fullName>
    </alternativeName>
</protein>
<comment type="function">
    <text evidence="3 4">Involved in virulence (PubMed:23716608, PubMed:24731253). Mediates adherence to human respiratory epithelial cells (PubMed:24731253).</text>
</comment>
<comment type="subunit">
    <text evidence="1">Homotrimer.</text>
</comment>
<comment type="subcellular location">
    <subcellularLocation>
        <location evidence="4">Cell surface</location>
    </subcellularLocation>
    <subcellularLocation>
        <location evidence="1">Cell outer membrane</location>
    </subcellularLocation>
    <text evidence="1">The C-terminal translocator domain is localized in the outer membrane and the passenger domain is at the cell surface.</text>
</comment>
<comment type="induction">
    <text evidence="4">Expressed in vivo during the course of aerosol infection. Expressed at very low levels under routine laboratory growth conditions.</text>
</comment>
<comment type="domain">
    <text evidence="7">Contains a well-conserved 23 amino acid extended signal peptide region (ESPR) preceding a typical N-terminal signal sequence. ESPR region may be involved in regulating the translocation of the autotransporter across the inner membrane into the periplasm.</text>
</comment>
<comment type="domain">
    <text evidence="1">The signal peptide, cleaved at the inner membrane, guides the autotransporter protein to the periplasmic space. Then, insertion of the C-terminal translocator domain in the outer membrane forms a hydrophilic pore for the translocation of the passenger domain to the bacterial cell surface.</text>
</comment>
<comment type="disruption phenotype">
    <text evidence="3 4">Lafontaine et al. show that disruption of the gene reduces adherence to cultures of normal human bronchial epithelium (NHBE) but does not impair binding to HEp-2 laryngeal cells and A549 type II pneumocytes (PubMed:24731253). In contrast, Campos et al. show that disruption of the gene decreases adherence to A549 cells and attenuates the ability of the bacteria to invade A549 cells (PubMed:23716608). Mutant does not show a plaque formation defect (PubMed:23716608). Mutation reduces the ability to disseminate and/or survive within the liver in a mouse model of infection (PubMed:23716608). Mutation does not affect the virulence in a mouse model of aerosol infection (PubMed:24731253).</text>
</comment>
<comment type="similarity">
    <text evidence="6">Belongs to the autotransporter-2 (AT-2) (TC 1.B.40) family.</text>
</comment>
<keyword id="KW-0002">3D-structure</keyword>
<keyword id="KW-0130">Cell adhesion</keyword>
<keyword id="KW-0998">Cell outer membrane</keyword>
<keyword id="KW-0472">Membrane</keyword>
<keyword id="KW-0653">Protein transport</keyword>
<keyword id="KW-0732">Signal</keyword>
<keyword id="KW-0812">Transmembrane</keyword>
<keyword id="KW-1134">Transmembrane beta strand</keyword>
<keyword id="KW-0813">Transport</keyword>
<keyword id="KW-0843">Virulence</keyword>
<feature type="signal peptide" evidence="7">
    <location>
        <begin position="1"/>
        <end position="71"/>
    </location>
</feature>
<feature type="chain" id="PRO_0000446522" description="Autotransporter adhesin BpaC">
    <location>
        <begin position="72"/>
        <end position="1152"/>
    </location>
</feature>
<feature type="region of interest" description="Surface exposed passenger domain" evidence="1">
    <location>
        <begin position="72"/>
        <end position="1061"/>
    </location>
</feature>
<feature type="region of interest" description="Disordered" evidence="2">
    <location>
        <begin position="420"/>
        <end position="886"/>
    </location>
</feature>
<feature type="region of interest" description="Disordered" evidence="2">
    <location>
        <begin position="900"/>
        <end position="949"/>
    </location>
</feature>
<feature type="region of interest" description="Outer membrane translocation of the passenger domain" evidence="1">
    <location>
        <begin position="1062"/>
        <end position="1099"/>
    </location>
</feature>
<feature type="region of interest" description="Translocator domain" evidence="1">
    <location>
        <begin position="1100"/>
        <end position="1152"/>
    </location>
</feature>
<feature type="compositionally biased region" description="Polar residues" evidence="2">
    <location>
        <begin position="427"/>
        <end position="442"/>
    </location>
</feature>
<feature type="compositionally biased region" description="Low complexity" evidence="2">
    <location>
        <begin position="443"/>
        <end position="504"/>
    </location>
</feature>
<feature type="compositionally biased region" description="Polar residues" evidence="2">
    <location>
        <begin position="505"/>
        <end position="519"/>
    </location>
</feature>
<feature type="compositionally biased region" description="Low complexity" evidence="2">
    <location>
        <begin position="520"/>
        <end position="588"/>
    </location>
</feature>
<feature type="compositionally biased region" description="Polar residues" evidence="2">
    <location>
        <begin position="589"/>
        <end position="603"/>
    </location>
</feature>
<feature type="compositionally biased region" description="Low complexity" evidence="2">
    <location>
        <begin position="604"/>
        <end position="630"/>
    </location>
</feature>
<feature type="compositionally biased region" description="Polar residues" evidence="2">
    <location>
        <begin position="631"/>
        <end position="645"/>
    </location>
</feature>
<feature type="compositionally biased region" description="Low complexity" evidence="2">
    <location>
        <begin position="646"/>
        <end position="672"/>
    </location>
</feature>
<feature type="compositionally biased region" description="Polar residues" evidence="2">
    <location>
        <begin position="673"/>
        <end position="687"/>
    </location>
</feature>
<feature type="compositionally biased region" description="Low complexity" evidence="2">
    <location>
        <begin position="688"/>
        <end position="714"/>
    </location>
</feature>
<feature type="compositionally biased region" description="Polar residues" evidence="2">
    <location>
        <begin position="715"/>
        <end position="729"/>
    </location>
</feature>
<feature type="compositionally biased region" description="Low complexity" evidence="2">
    <location>
        <begin position="730"/>
        <end position="756"/>
    </location>
</feature>
<feature type="compositionally biased region" description="Polar residues" evidence="2">
    <location>
        <begin position="757"/>
        <end position="771"/>
    </location>
</feature>
<feature type="compositionally biased region" description="Low complexity" evidence="2">
    <location>
        <begin position="772"/>
        <end position="840"/>
    </location>
</feature>
<feature type="compositionally biased region" description="Low complexity" evidence="2">
    <location>
        <begin position="848"/>
        <end position="886"/>
    </location>
</feature>
<feature type="strand" evidence="9">
    <location>
        <begin position="746"/>
        <end position="749"/>
    </location>
</feature>
<feature type="strand" evidence="9">
    <location>
        <begin position="760"/>
        <end position="763"/>
    </location>
</feature>
<feature type="strand" evidence="9">
    <location>
        <begin position="774"/>
        <end position="777"/>
    </location>
</feature>
<feature type="strand" evidence="9">
    <location>
        <begin position="788"/>
        <end position="791"/>
    </location>
</feature>
<feature type="strand" evidence="9">
    <location>
        <begin position="802"/>
        <end position="805"/>
    </location>
</feature>
<feature type="strand" evidence="9">
    <location>
        <begin position="816"/>
        <end position="819"/>
    </location>
</feature>
<feature type="strand" evidence="9">
    <location>
        <begin position="830"/>
        <end position="833"/>
    </location>
</feature>
<feature type="strand" evidence="9">
    <location>
        <begin position="844"/>
        <end position="847"/>
    </location>
</feature>
<feature type="strand" evidence="9">
    <location>
        <begin position="858"/>
        <end position="861"/>
    </location>
</feature>
<feature type="strand" evidence="9">
    <location>
        <begin position="872"/>
        <end position="875"/>
    </location>
</feature>
<feature type="strand" evidence="9">
    <location>
        <begin position="886"/>
        <end position="889"/>
    </location>
</feature>
<feature type="strand" evidence="9">
    <location>
        <begin position="900"/>
        <end position="903"/>
    </location>
</feature>
<feature type="strand" evidence="9">
    <location>
        <begin position="914"/>
        <end position="917"/>
    </location>
</feature>
<feature type="strand" evidence="9">
    <location>
        <begin position="928"/>
        <end position="931"/>
    </location>
</feature>
<feature type="strand" evidence="9">
    <location>
        <begin position="942"/>
        <end position="945"/>
    </location>
</feature>
<feature type="strand" evidence="9">
    <location>
        <begin position="956"/>
        <end position="959"/>
    </location>
</feature>
<feature type="strand" evidence="9">
    <location>
        <begin position="970"/>
        <end position="973"/>
    </location>
</feature>
<feature type="strand" evidence="9">
    <location>
        <begin position="984"/>
        <end position="987"/>
    </location>
</feature>
<feature type="strand" evidence="9">
    <location>
        <begin position="998"/>
        <end position="1001"/>
    </location>
</feature>
<feature type="strand" evidence="9">
    <location>
        <begin position="1012"/>
        <end position="1015"/>
    </location>
</feature>
<feature type="strand" evidence="9">
    <location>
        <begin position="1026"/>
        <end position="1030"/>
    </location>
</feature>
<feature type="helix" evidence="9">
    <location>
        <begin position="1052"/>
        <end position="1055"/>
    </location>
</feature>
<organism>
    <name type="scientific">Burkholderia pseudomallei (strain 1026b)</name>
    <dbReference type="NCBI Taxonomy" id="884204"/>
    <lineage>
        <taxon>Bacteria</taxon>
        <taxon>Pseudomonadati</taxon>
        <taxon>Pseudomonadota</taxon>
        <taxon>Betaproteobacteria</taxon>
        <taxon>Burkholderiales</taxon>
        <taxon>Burkholderiaceae</taxon>
        <taxon>Burkholderia</taxon>
        <taxon>pseudomallei group</taxon>
    </lineage>
</organism>
<sequence>MNRIFKSIWCEQTRTWVAASEHAVARGGRASSVVASAGGLEKVLKLSILGAASLIAMGVVGPFAEEAMAANNAGVCLTYNGSSNNTSGTGGWFADGCKSAGWVQGMVTNSKTDWVGLTADDTQIVLDGSAGSIYFRTGGINGNVLTMSNATGGVLLSGLAAGVNPTDAVNMSQLTSLSTSTATGITSLSTSTATSIASLSTSMLSLGVGVVTQDASTGAISVGANSPGLTVDFAGGQGPRTLTGVAAGVNATDAVNVGQLASLSTSTAAGLSTAASGVASLSTSLLGAVGDLASLSTSASTGLATADSGIASLSTSLLGTADNVTSLSTSLSTVNANLAGLQTSVDNVVSYDDPSKSAITLGGAGVTTPVLLTNVAAGKIAATSTDAVNGSQLYTLQQEFSQQYDLLTSQVSSLSTSVSGLQGSVSANTGTASGDNSTASGDNATASGTNSTANGTNSTASGDNSTASGTNASASGENSTATGTDSTASGSNSTANGTNSTASGDNSTASGTNASATGENSTATGTDSTASGSNSTANGTNSTASGDNSTASGTNASASGENSTATGTDSTASGSNSTANGTNSTASGDNSTASGTNASATGENSTATGTDSTASGSNSTANGTNSTASGDNSTASGTNASATGENSTATGTDSTASGSNSTANGTNSTASGDNSTASGTNASATGENSTATGTDSTASGSNSTANGTNSTASGDNSTASGTNASATGENSTATGTDSTASGSNSTANGANSTASGDNSTASGTNASATGENSTATGTDSTASGSNSTANGTNSTASGNNSTASGTNASATGENSTATGTDSAASGTNSTANGTNSTASGDNSTASGTNASATGENSTATGTASTASGSNSTANGANSTASGAGATATGENAAATGAGATATGNNASASGTSSTAGGANAIASGENSTTNGANSTASGNGSSAFGESAAAAGDGSTALGANAVASGVGSVATGAGSVASGANSSAYGTGSNATGAGSVAIGQGATASGSNSVALGTGSVASEDNTVSVGSAGSERRITNVAAGVNATDAVNVGQLNSAVSGIRNQMDGMQGQIDTLARDAYSGIAAATALTMIPDVDPGKTLAVGIGTANFKGYQASALGATARITQNLKVKTGVSYSGSNYVWGAGMSYQW</sequence>
<name>BPAC_BURP2</name>
<dbReference type="EMBL" id="CP002833">
    <property type="protein sequence ID" value="AFI66204.1"/>
    <property type="molecule type" value="Genomic_DNA"/>
</dbReference>
<dbReference type="RefSeq" id="WP_014696818.1">
    <property type="nucleotide sequence ID" value="NC_017831.1"/>
</dbReference>
<dbReference type="PDB" id="7O23">
    <property type="method" value="X-ray"/>
    <property type="resolution" value="1.40 A"/>
    <property type="chains" value="A=741-1055"/>
</dbReference>
<dbReference type="PDBsum" id="7O23"/>
<dbReference type="SMR" id="A0A0H3HIJ5"/>
<dbReference type="KEGG" id="bpz:BP1026B_I1575"/>
<dbReference type="PATRIC" id="fig|884204.3.peg.1749"/>
<dbReference type="Proteomes" id="UP000010087">
    <property type="component" value="Chromosome 1"/>
</dbReference>
<dbReference type="GO" id="GO:0009279">
    <property type="term" value="C:cell outer membrane"/>
    <property type="evidence" value="ECO:0007669"/>
    <property type="project" value="UniProtKB-SubCell"/>
</dbReference>
<dbReference type="GO" id="GO:0009986">
    <property type="term" value="C:cell surface"/>
    <property type="evidence" value="ECO:0007669"/>
    <property type="project" value="UniProtKB-SubCell"/>
</dbReference>
<dbReference type="GO" id="GO:0007155">
    <property type="term" value="P:cell adhesion"/>
    <property type="evidence" value="ECO:0007669"/>
    <property type="project" value="UniProtKB-KW"/>
</dbReference>
<dbReference type="GO" id="GO:0015031">
    <property type="term" value="P:protein transport"/>
    <property type="evidence" value="ECO:0007669"/>
    <property type="project" value="UniProtKB-KW"/>
</dbReference>
<dbReference type="CDD" id="cd12820">
    <property type="entry name" value="LbR_YadA-like"/>
    <property type="match status" value="6"/>
</dbReference>
<dbReference type="Gene3D" id="3.30.1300.30">
    <property type="entry name" value="GSPII I/J protein-like"/>
    <property type="match status" value="1"/>
</dbReference>
<dbReference type="Gene3D" id="2.150.10.10">
    <property type="entry name" value="Serralysin-like metalloprotease, C-terminal"/>
    <property type="match status" value="8"/>
</dbReference>
<dbReference type="InterPro" id="IPR008640">
    <property type="entry name" value="Adhesin_Head_dom"/>
</dbReference>
<dbReference type="InterPro" id="IPR008635">
    <property type="entry name" value="Coiled_stalk_dom"/>
</dbReference>
<dbReference type="InterPro" id="IPR024973">
    <property type="entry name" value="ESPR"/>
</dbReference>
<dbReference type="InterPro" id="IPR045584">
    <property type="entry name" value="Pilin-like"/>
</dbReference>
<dbReference type="InterPro" id="IPR011049">
    <property type="entry name" value="Serralysin-like_metalloprot_C"/>
</dbReference>
<dbReference type="InterPro" id="IPR005594">
    <property type="entry name" value="YadA_C"/>
</dbReference>
<dbReference type="Pfam" id="PF13018">
    <property type="entry name" value="ESPR"/>
    <property type="match status" value="1"/>
</dbReference>
<dbReference type="Pfam" id="PF03895">
    <property type="entry name" value="YadA_anchor"/>
    <property type="match status" value="1"/>
</dbReference>
<dbReference type="Pfam" id="PF05658">
    <property type="entry name" value="YadA_head"/>
    <property type="match status" value="28"/>
</dbReference>
<dbReference type="Pfam" id="PF05662">
    <property type="entry name" value="YadA_stalk"/>
    <property type="match status" value="4"/>
</dbReference>
<dbReference type="SUPFAM" id="SSF101967">
    <property type="entry name" value="Adhesin YadA, collagen-binding domain"/>
    <property type="match status" value="5"/>
</dbReference>
<dbReference type="SUPFAM" id="SSF54523">
    <property type="entry name" value="Pili subunits"/>
    <property type="match status" value="1"/>
</dbReference>
<proteinExistence type="evidence at protein level"/>